<evidence type="ECO:0000255" key="1">
    <source>
        <dbReference type="HAMAP-Rule" id="MF_01342"/>
    </source>
</evidence>
<evidence type="ECO:0000305" key="2"/>
<evidence type="ECO:0007829" key="3">
    <source>
        <dbReference type="PDB" id="7M4V"/>
    </source>
</evidence>
<dbReference type="EMBL" id="CP001182">
    <property type="protein sequence ID" value="ACJ42890.1"/>
    <property type="molecule type" value="Genomic_DNA"/>
</dbReference>
<dbReference type="RefSeq" id="WP_000941215.1">
    <property type="nucleotide sequence ID" value="NC_011586.2"/>
</dbReference>
<dbReference type="PDB" id="6V39">
    <property type="method" value="EM"/>
    <property type="resolution" value="3.04 A"/>
    <property type="chains" value="L=1-137"/>
</dbReference>
<dbReference type="PDB" id="6V3A">
    <property type="method" value="EM"/>
    <property type="resolution" value="2.82 A"/>
    <property type="chains" value="L=1-137"/>
</dbReference>
<dbReference type="PDB" id="6V3B">
    <property type="method" value="EM"/>
    <property type="resolution" value="2.91 A"/>
    <property type="chains" value="L=1-137"/>
</dbReference>
<dbReference type="PDB" id="6V3D">
    <property type="method" value="EM"/>
    <property type="resolution" value="2.95 A"/>
    <property type="chains" value="L=1-137"/>
</dbReference>
<dbReference type="PDB" id="7M4V">
    <property type="method" value="EM"/>
    <property type="resolution" value="2.54 A"/>
    <property type="chains" value="L=1-137"/>
</dbReference>
<dbReference type="PDB" id="7M4W">
    <property type="method" value="EM"/>
    <property type="resolution" value="2.55 A"/>
    <property type="chains" value="L=1-137"/>
</dbReference>
<dbReference type="PDB" id="7M4X">
    <property type="method" value="EM"/>
    <property type="resolution" value="2.66 A"/>
    <property type="chains" value="L=1-137"/>
</dbReference>
<dbReference type="PDB" id="7M4Y">
    <property type="method" value="EM"/>
    <property type="resolution" value="2.50 A"/>
    <property type="chains" value="L=1-137"/>
</dbReference>
<dbReference type="PDB" id="7M4Z">
    <property type="method" value="EM"/>
    <property type="resolution" value="2.92 A"/>
    <property type="chains" value="L=1-137"/>
</dbReference>
<dbReference type="PDB" id="7RYF">
    <property type="method" value="EM"/>
    <property type="resolution" value="2.65 A"/>
    <property type="chains" value="L=1-137"/>
</dbReference>
<dbReference type="PDB" id="7RYG">
    <property type="method" value="EM"/>
    <property type="resolution" value="2.38 A"/>
    <property type="chains" value="L=1-137"/>
</dbReference>
<dbReference type="PDB" id="7RYH">
    <property type="method" value="EM"/>
    <property type="resolution" value="2.43 A"/>
    <property type="chains" value="L=1-137"/>
</dbReference>
<dbReference type="PDB" id="7UVV">
    <property type="method" value="EM"/>
    <property type="resolution" value="2.50 A"/>
    <property type="chains" value="L=1-137"/>
</dbReference>
<dbReference type="PDB" id="7UVW">
    <property type="method" value="EM"/>
    <property type="resolution" value="2.37 A"/>
    <property type="chains" value="L=1-137"/>
</dbReference>
<dbReference type="PDB" id="7UVX">
    <property type="method" value="EM"/>
    <property type="resolution" value="2.35 A"/>
    <property type="chains" value="L=1-137"/>
</dbReference>
<dbReference type="PDB" id="7UVY">
    <property type="method" value="EM"/>
    <property type="resolution" value="2.39 A"/>
    <property type="chains" value="L=1-137"/>
</dbReference>
<dbReference type="PDB" id="7UVZ">
    <property type="method" value="EM"/>
    <property type="resolution" value="2.21 A"/>
    <property type="chains" value="L=1-137"/>
</dbReference>
<dbReference type="PDB" id="7UW1">
    <property type="method" value="EM"/>
    <property type="resolution" value="2.21 A"/>
    <property type="chains" value="L=1-137"/>
</dbReference>
<dbReference type="PDBsum" id="6V39"/>
<dbReference type="PDBsum" id="6V3A"/>
<dbReference type="PDBsum" id="6V3B"/>
<dbReference type="PDBsum" id="6V3D"/>
<dbReference type="PDBsum" id="7M4V"/>
<dbReference type="PDBsum" id="7M4W"/>
<dbReference type="PDBsum" id="7M4X"/>
<dbReference type="PDBsum" id="7M4Y"/>
<dbReference type="PDBsum" id="7M4Z"/>
<dbReference type="PDBsum" id="7RYF"/>
<dbReference type="PDBsum" id="7RYG"/>
<dbReference type="PDBsum" id="7RYH"/>
<dbReference type="PDBsum" id="7UVV"/>
<dbReference type="PDBsum" id="7UVW"/>
<dbReference type="PDBsum" id="7UVX"/>
<dbReference type="PDBsum" id="7UVY"/>
<dbReference type="PDBsum" id="7UVZ"/>
<dbReference type="PDBsum" id="7UW1"/>
<dbReference type="EMDB" id="EMD-21030"/>
<dbReference type="EMDB" id="EMD-21031"/>
<dbReference type="EMDB" id="EMD-21032"/>
<dbReference type="EMDB" id="EMD-21033"/>
<dbReference type="EMDB" id="EMD-23667"/>
<dbReference type="EMDB" id="EMD-23668"/>
<dbReference type="EMDB" id="EMD-23669"/>
<dbReference type="EMDB" id="EMD-23670"/>
<dbReference type="EMDB" id="EMD-23671"/>
<dbReference type="EMDB" id="EMD-24738"/>
<dbReference type="EMDB" id="EMD-24739"/>
<dbReference type="EMDB" id="EMD-24740"/>
<dbReference type="EMDB" id="EMD-26817"/>
<dbReference type="EMDB" id="EMD-26818"/>
<dbReference type="EMDB" id="EMD-26819"/>
<dbReference type="EMDB" id="EMD-26820"/>
<dbReference type="EMDB" id="EMD-26821"/>
<dbReference type="EMDB" id="EMD-26822"/>
<dbReference type="SMR" id="B7IA32"/>
<dbReference type="IntAct" id="B7IA32">
    <property type="interactions" value="2"/>
</dbReference>
<dbReference type="GeneID" id="92895310"/>
<dbReference type="KEGG" id="abn:AB57_3523"/>
<dbReference type="HOGENOM" id="CLU_078858_2_1_6"/>
<dbReference type="Proteomes" id="UP000007094">
    <property type="component" value="Chromosome"/>
</dbReference>
<dbReference type="GO" id="GO:0022625">
    <property type="term" value="C:cytosolic large ribosomal subunit"/>
    <property type="evidence" value="ECO:0007669"/>
    <property type="project" value="TreeGrafter"/>
</dbReference>
<dbReference type="GO" id="GO:0019843">
    <property type="term" value="F:rRNA binding"/>
    <property type="evidence" value="ECO:0007669"/>
    <property type="project" value="UniProtKB-UniRule"/>
</dbReference>
<dbReference type="GO" id="GO:0003735">
    <property type="term" value="F:structural constituent of ribosome"/>
    <property type="evidence" value="ECO:0007669"/>
    <property type="project" value="InterPro"/>
</dbReference>
<dbReference type="GO" id="GO:0000049">
    <property type="term" value="F:tRNA binding"/>
    <property type="evidence" value="ECO:0007669"/>
    <property type="project" value="UniProtKB-KW"/>
</dbReference>
<dbReference type="GO" id="GO:0006412">
    <property type="term" value="P:translation"/>
    <property type="evidence" value="ECO:0007669"/>
    <property type="project" value="UniProtKB-UniRule"/>
</dbReference>
<dbReference type="CDD" id="cd01433">
    <property type="entry name" value="Ribosomal_L16_L10e"/>
    <property type="match status" value="1"/>
</dbReference>
<dbReference type="FunFam" id="3.90.1170.10:FF:000001">
    <property type="entry name" value="50S ribosomal protein L16"/>
    <property type="match status" value="1"/>
</dbReference>
<dbReference type="Gene3D" id="3.90.1170.10">
    <property type="entry name" value="Ribosomal protein L10e/L16"/>
    <property type="match status" value="1"/>
</dbReference>
<dbReference type="HAMAP" id="MF_01342">
    <property type="entry name" value="Ribosomal_uL16"/>
    <property type="match status" value="1"/>
</dbReference>
<dbReference type="InterPro" id="IPR047873">
    <property type="entry name" value="Ribosomal_uL16"/>
</dbReference>
<dbReference type="InterPro" id="IPR000114">
    <property type="entry name" value="Ribosomal_uL16_bact-type"/>
</dbReference>
<dbReference type="InterPro" id="IPR020798">
    <property type="entry name" value="Ribosomal_uL16_CS"/>
</dbReference>
<dbReference type="InterPro" id="IPR016180">
    <property type="entry name" value="Ribosomal_uL16_dom"/>
</dbReference>
<dbReference type="InterPro" id="IPR036920">
    <property type="entry name" value="Ribosomal_uL16_sf"/>
</dbReference>
<dbReference type="NCBIfam" id="TIGR01164">
    <property type="entry name" value="rplP_bact"/>
    <property type="match status" value="1"/>
</dbReference>
<dbReference type="PANTHER" id="PTHR12220">
    <property type="entry name" value="50S/60S RIBOSOMAL PROTEIN L16"/>
    <property type="match status" value="1"/>
</dbReference>
<dbReference type="PANTHER" id="PTHR12220:SF13">
    <property type="entry name" value="LARGE RIBOSOMAL SUBUNIT PROTEIN UL16M"/>
    <property type="match status" value="1"/>
</dbReference>
<dbReference type="Pfam" id="PF00252">
    <property type="entry name" value="Ribosomal_L16"/>
    <property type="match status" value="1"/>
</dbReference>
<dbReference type="PRINTS" id="PR00060">
    <property type="entry name" value="RIBOSOMALL16"/>
</dbReference>
<dbReference type="SUPFAM" id="SSF54686">
    <property type="entry name" value="Ribosomal protein L16p/L10e"/>
    <property type="match status" value="1"/>
</dbReference>
<dbReference type="PROSITE" id="PS00701">
    <property type="entry name" value="RIBOSOMAL_L16_2"/>
    <property type="match status" value="1"/>
</dbReference>
<sequence length="137" mass="15466">MLQPKRTKFRKVHKGRNTGLAHRGSTVSFGSIAIKATERGRMTARQIEAARRTISRRIKRGGKIFIRVFPDKPITEKPLEVRMGNGKGNVEYWVCEIKPGKILYEIEGVNEDLAREAFALAAAKLPFKTTIVTRTVM</sequence>
<reference key="1">
    <citation type="journal article" date="2008" name="J. Bacteriol.">
        <title>Comparative genome sequence analysis of multidrug-resistant Acinetobacter baumannii.</title>
        <authorList>
            <person name="Adams M.D."/>
            <person name="Goglin K."/>
            <person name="Molyneaux N."/>
            <person name="Hujer K.M."/>
            <person name="Lavender H."/>
            <person name="Jamison J.J."/>
            <person name="MacDonald I.J."/>
            <person name="Martin K.M."/>
            <person name="Russo T."/>
            <person name="Campagnari A.A."/>
            <person name="Hujer A.M."/>
            <person name="Bonomo R.A."/>
            <person name="Gill S.R."/>
        </authorList>
    </citation>
    <scope>NUCLEOTIDE SEQUENCE [LARGE SCALE GENOMIC DNA]</scope>
    <source>
        <strain>AB0057</strain>
    </source>
</reference>
<organism>
    <name type="scientific">Acinetobacter baumannii (strain AB0057)</name>
    <dbReference type="NCBI Taxonomy" id="480119"/>
    <lineage>
        <taxon>Bacteria</taxon>
        <taxon>Pseudomonadati</taxon>
        <taxon>Pseudomonadota</taxon>
        <taxon>Gammaproteobacteria</taxon>
        <taxon>Moraxellales</taxon>
        <taxon>Moraxellaceae</taxon>
        <taxon>Acinetobacter</taxon>
        <taxon>Acinetobacter calcoaceticus/baumannii complex</taxon>
    </lineage>
</organism>
<protein>
    <recommendedName>
        <fullName evidence="1">Large ribosomal subunit protein uL16</fullName>
    </recommendedName>
    <alternativeName>
        <fullName evidence="2">50S ribosomal protein L16</fullName>
    </alternativeName>
</protein>
<proteinExistence type="evidence at protein level"/>
<feature type="chain" id="PRO_1000142907" description="Large ribosomal subunit protein uL16">
    <location>
        <begin position="1"/>
        <end position="137"/>
    </location>
</feature>
<feature type="strand" evidence="3">
    <location>
        <begin position="29"/>
        <end position="38"/>
    </location>
</feature>
<feature type="strand" evidence="3">
    <location>
        <begin position="40"/>
        <end position="43"/>
    </location>
</feature>
<feature type="helix" evidence="3">
    <location>
        <begin position="44"/>
        <end position="58"/>
    </location>
</feature>
<feature type="strand" evidence="3">
    <location>
        <begin position="62"/>
        <end position="66"/>
    </location>
</feature>
<feature type="strand" evidence="3">
    <location>
        <begin position="72"/>
        <end position="76"/>
    </location>
</feature>
<feature type="strand" evidence="3">
    <location>
        <begin position="89"/>
        <end position="97"/>
    </location>
</feature>
<feature type="strand" evidence="3">
    <location>
        <begin position="102"/>
        <end position="109"/>
    </location>
</feature>
<feature type="helix" evidence="3">
    <location>
        <begin position="111"/>
        <end position="122"/>
    </location>
</feature>
<feature type="strand" evidence="3">
    <location>
        <begin position="129"/>
        <end position="133"/>
    </location>
</feature>
<gene>
    <name evidence="1" type="primary">rplP</name>
    <name type="ordered locus">AB57_3523</name>
</gene>
<keyword id="KW-0002">3D-structure</keyword>
<keyword id="KW-0687">Ribonucleoprotein</keyword>
<keyword id="KW-0689">Ribosomal protein</keyword>
<keyword id="KW-0694">RNA-binding</keyword>
<keyword id="KW-0699">rRNA-binding</keyword>
<keyword id="KW-0820">tRNA-binding</keyword>
<name>RL16_ACIB5</name>
<accession>B7IA32</accession>
<comment type="function">
    <text evidence="1">Binds 23S rRNA and is also seen to make contacts with the A and possibly P site tRNAs.</text>
</comment>
<comment type="subunit">
    <text evidence="1">Part of the 50S ribosomal subunit.</text>
</comment>
<comment type="similarity">
    <text evidence="1">Belongs to the universal ribosomal protein uL16 family.</text>
</comment>